<proteinExistence type="inferred from homology"/>
<keyword id="KW-0413">Isomerase</keyword>
<keyword id="KW-1185">Reference proteome</keyword>
<reference key="1">
    <citation type="journal article" date="1995" name="DNA Res.">
        <title>Sequence analysis of the genome of the unicellular cyanobacterium Synechocystis sp. strain PCC6803. I. Sequence features in the 1 Mb region from map positions 64% to 92% of the genome.</title>
        <authorList>
            <person name="Kaneko T."/>
            <person name="Tanaka A."/>
            <person name="Sato S."/>
            <person name="Kotani H."/>
            <person name="Sazuka T."/>
            <person name="Miyajima N."/>
            <person name="Sugiura M."/>
            <person name="Tabata S."/>
        </authorList>
    </citation>
    <scope>NUCLEOTIDE SEQUENCE [LARGE SCALE GENOMIC DNA]</scope>
    <source>
        <strain>ATCC 27184 / PCC 6803 / N-1</strain>
    </source>
</reference>
<reference key="2">
    <citation type="journal article" date="1996" name="DNA Res.">
        <title>Sequence analysis of the genome of the unicellular cyanobacterium Synechocystis sp. strain PCC6803. II. Sequence determination of the entire genome and assignment of potential protein-coding regions.</title>
        <authorList>
            <person name="Kaneko T."/>
            <person name="Sato S."/>
            <person name="Kotani H."/>
            <person name="Tanaka A."/>
            <person name="Asamizu E."/>
            <person name="Nakamura Y."/>
            <person name="Miyajima N."/>
            <person name="Hirosawa M."/>
            <person name="Sugiura M."/>
            <person name="Sasamoto S."/>
            <person name="Kimura T."/>
            <person name="Hosouchi T."/>
            <person name="Matsuno A."/>
            <person name="Muraki A."/>
            <person name="Nakazaki N."/>
            <person name="Naruo K."/>
            <person name="Okumura S."/>
            <person name="Shimpo S."/>
            <person name="Takeuchi C."/>
            <person name="Wada T."/>
            <person name="Watanabe A."/>
            <person name="Yamada M."/>
            <person name="Yasuda M."/>
            <person name="Tabata S."/>
        </authorList>
    </citation>
    <scope>NUCLEOTIDE SEQUENCE [LARGE SCALE GENOMIC DNA]</scope>
    <source>
        <strain>ATCC 27184 / PCC 6803 / Kazusa</strain>
    </source>
</reference>
<protein>
    <recommendedName>
        <fullName evidence="1">Ribose-5-phosphate isomerase A</fullName>
        <ecNumber evidence="1">5.3.1.6</ecNumber>
    </recommendedName>
    <alternativeName>
        <fullName evidence="1">Phosphoriboisomerase A</fullName>
        <shortName evidence="1">PRI</shortName>
    </alternativeName>
</protein>
<sequence length="235" mass="24753">MAELDAANLMKQAVGKAAADRVKSNTIVGLGTGSTTAYALEFIGDRLKKGELENVVGIPTSFQAEVLARKYGIPLTTLDVADRIDIAIDGADEVDPQKNLIKGGGAAHTREKIVDALAETFLVVVDSGKLVDKLGSTFLLPVEVIPMALTPVMRALAKLGGKPELRMGVKKAGPVVTDQGNLVIDVKFDAITNPAELEKTINNLPGVLENGLFVGVADVILVGEIIDGQPTVREF</sequence>
<dbReference type="EC" id="5.3.1.6" evidence="1"/>
<dbReference type="EMBL" id="BA000022">
    <property type="protein sequence ID" value="BAA10413.1"/>
    <property type="molecule type" value="Genomic_DNA"/>
</dbReference>
<dbReference type="PIR" id="S76567">
    <property type="entry name" value="S76567"/>
</dbReference>
<dbReference type="SMR" id="Q55766"/>
<dbReference type="STRING" id="1148.gene:10499914"/>
<dbReference type="PaxDb" id="1148-1001678"/>
<dbReference type="EnsemblBacteria" id="BAA10413">
    <property type="protein sequence ID" value="BAA10413"/>
    <property type="gene ID" value="BAA10413"/>
</dbReference>
<dbReference type="KEGG" id="syn:slr0194"/>
<dbReference type="eggNOG" id="COG0120">
    <property type="taxonomic scope" value="Bacteria"/>
</dbReference>
<dbReference type="InParanoid" id="Q55766"/>
<dbReference type="PhylomeDB" id="Q55766"/>
<dbReference type="UniPathway" id="UPA00115">
    <property type="reaction ID" value="UER00412"/>
</dbReference>
<dbReference type="Proteomes" id="UP000001425">
    <property type="component" value="Chromosome"/>
</dbReference>
<dbReference type="GO" id="GO:0005829">
    <property type="term" value="C:cytosol"/>
    <property type="evidence" value="ECO:0000318"/>
    <property type="project" value="GO_Central"/>
</dbReference>
<dbReference type="GO" id="GO:0004751">
    <property type="term" value="F:ribose-5-phosphate isomerase activity"/>
    <property type="evidence" value="ECO:0000318"/>
    <property type="project" value="GO_Central"/>
</dbReference>
<dbReference type="GO" id="GO:0006014">
    <property type="term" value="P:D-ribose metabolic process"/>
    <property type="evidence" value="ECO:0000318"/>
    <property type="project" value="GO_Central"/>
</dbReference>
<dbReference type="GO" id="GO:0009052">
    <property type="term" value="P:pentose-phosphate shunt, non-oxidative branch"/>
    <property type="evidence" value="ECO:0000318"/>
    <property type="project" value="GO_Central"/>
</dbReference>
<dbReference type="CDD" id="cd01398">
    <property type="entry name" value="RPI_A"/>
    <property type="match status" value="1"/>
</dbReference>
<dbReference type="FunFam" id="3.30.70.260:FF:000018">
    <property type="entry name" value="Ribose-5-phosphate isomerase A"/>
    <property type="match status" value="1"/>
</dbReference>
<dbReference type="FunFam" id="3.40.50.1360:FF:000001">
    <property type="entry name" value="Ribose-5-phosphate isomerase A"/>
    <property type="match status" value="1"/>
</dbReference>
<dbReference type="Gene3D" id="3.30.70.260">
    <property type="match status" value="1"/>
</dbReference>
<dbReference type="Gene3D" id="3.40.50.1360">
    <property type="match status" value="1"/>
</dbReference>
<dbReference type="HAMAP" id="MF_00170">
    <property type="entry name" value="Rib_5P_isom_A"/>
    <property type="match status" value="1"/>
</dbReference>
<dbReference type="InterPro" id="IPR037171">
    <property type="entry name" value="NagB/RpiA_transferase-like"/>
</dbReference>
<dbReference type="InterPro" id="IPR020672">
    <property type="entry name" value="Ribose5P_isomerase_typA_subgr"/>
</dbReference>
<dbReference type="InterPro" id="IPR004788">
    <property type="entry name" value="Ribose5P_isomerase_type_A"/>
</dbReference>
<dbReference type="NCBIfam" id="NF001924">
    <property type="entry name" value="PRK00702.1"/>
    <property type="match status" value="1"/>
</dbReference>
<dbReference type="NCBIfam" id="TIGR00021">
    <property type="entry name" value="rpiA"/>
    <property type="match status" value="1"/>
</dbReference>
<dbReference type="PANTHER" id="PTHR11934">
    <property type="entry name" value="RIBOSE-5-PHOSPHATE ISOMERASE"/>
    <property type="match status" value="1"/>
</dbReference>
<dbReference type="PANTHER" id="PTHR11934:SF0">
    <property type="entry name" value="RIBOSE-5-PHOSPHATE ISOMERASE"/>
    <property type="match status" value="1"/>
</dbReference>
<dbReference type="Pfam" id="PF06026">
    <property type="entry name" value="Rib_5-P_isom_A"/>
    <property type="match status" value="1"/>
</dbReference>
<dbReference type="SUPFAM" id="SSF75445">
    <property type="entry name" value="D-ribose-5-phosphate isomerase (RpiA), lid domain"/>
    <property type="match status" value="1"/>
</dbReference>
<dbReference type="SUPFAM" id="SSF100950">
    <property type="entry name" value="NagB/RpiA/CoA transferase-like"/>
    <property type="match status" value="1"/>
</dbReference>
<organism>
    <name type="scientific">Synechocystis sp. (strain ATCC 27184 / PCC 6803 / Kazusa)</name>
    <dbReference type="NCBI Taxonomy" id="1111708"/>
    <lineage>
        <taxon>Bacteria</taxon>
        <taxon>Bacillati</taxon>
        <taxon>Cyanobacteriota</taxon>
        <taxon>Cyanophyceae</taxon>
        <taxon>Synechococcales</taxon>
        <taxon>Merismopediaceae</taxon>
        <taxon>Synechocystis</taxon>
    </lineage>
</organism>
<evidence type="ECO:0000255" key="1">
    <source>
        <dbReference type="HAMAP-Rule" id="MF_00170"/>
    </source>
</evidence>
<accession>Q55766</accession>
<gene>
    <name evidence="1" type="primary">rpiA</name>
    <name type="ordered locus">slr0194</name>
</gene>
<feature type="chain" id="PRO_0000158485" description="Ribose-5-phosphate isomerase A">
    <location>
        <begin position="1"/>
        <end position="235"/>
    </location>
</feature>
<feature type="active site" description="Proton acceptor" evidence="1">
    <location>
        <position position="111"/>
    </location>
</feature>
<feature type="binding site" evidence="1">
    <location>
        <begin position="32"/>
        <end position="35"/>
    </location>
    <ligand>
        <name>substrate</name>
    </ligand>
</feature>
<feature type="binding site" evidence="1">
    <location>
        <begin position="89"/>
        <end position="92"/>
    </location>
    <ligand>
        <name>substrate</name>
    </ligand>
</feature>
<feature type="binding site" evidence="1">
    <location>
        <begin position="102"/>
        <end position="105"/>
    </location>
    <ligand>
        <name>substrate</name>
    </ligand>
</feature>
<feature type="binding site" evidence="1">
    <location>
        <position position="129"/>
    </location>
    <ligand>
        <name>substrate</name>
    </ligand>
</feature>
<comment type="function">
    <text evidence="1">Catalyzes the reversible conversion of ribose-5-phosphate to ribulose 5-phosphate.</text>
</comment>
<comment type="catalytic activity">
    <reaction evidence="1">
        <text>aldehydo-D-ribose 5-phosphate = D-ribulose 5-phosphate</text>
        <dbReference type="Rhea" id="RHEA:14657"/>
        <dbReference type="ChEBI" id="CHEBI:58121"/>
        <dbReference type="ChEBI" id="CHEBI:58273"/>
        <dbReference type="EC" id="5.3.1.6"/>
    </reaction>
</comment>
<comment type="pathway">
    <text evidence="1">Carbohydrate degradation; pentose phosphate pathway; D-ribose 5-phosphate from D-ribulose 5-phosphate (non-oxidative stage): step 1/1.</text>
</comment>
<comment type="subunit">
    <text evidence="1">Homodimer.</text>
</comment>
<comment type="similarity">
    <text evidence="1">Belongs to the ribose 5-phosphate isomerase family.</text>
</comment>
<name>RPIA_SYNY3</name>